<gene>
    <name type="primary">MT-CYB</name>
    <name type="synonym">COB</name>
    <name type="synonym">CYTB</name>
    <name type="synonym">MTCYB</name>
</gene>
<evidence type="ECO:0000250" key="1"/>
<evidence type="ECO:0000250" key="2">
    <source>
        <dbReference type="UniProtKB" id="P00157"/>
    </source>
</evidence>
<evidence type="ECO:0000255" key="3">
    <source>
        <dbReference type="PROSITE-ProRule" id="PRU00967"/>
    </source>
</evidence>
<evidence type="ECO:0000255" key="4">
    <source>
        <dbReference type="PROSITE-ProRule" id="PRU00968"/>
    </source>
</evidence>
<sequence>MTNIRKSHPLFKIINDSFIDLPAPSSISSWWNFGSLLGVCLAVQILTGLFLAMHYTSDTATAFYSVTHICRDVNYGWVLRYLHANGASMFFICLFLHVGRGIYYGSYTFSETWNIGIILLFAVMATAFMGYVLPWGQMSFWGATVITNLLSAIPYVGTTLVEWVWGGFSVDKATLTRFFALHFLLPFIISAMVMVHLLFLHETGSNNPTGIPSDADMIPFHPYYTIKDILGLVLMLMALLSLVLFAPDLLGDPDNYTPANPLNTPPHIKPEWYFLFAYAILRSIPNKLGGVVALVLSILVLAVIPLLHTSKQRSMTFRPLSQCLFWLLVADLLTLTWIGGQPVEHPFIIIGQLASILYFLIILVLMPLASIAENHLLKW</sequence>
<name>CYB_RHIBL</name>
<keyword id="KW-0249">Electron transport</keyword>
<keyword id="KW-0349">Heme</keyword>
<keyword id="KW-0408">Iron</keyword>
<keyword id="KW-0472">Membrane</keyword>
<keyword id="KW-0479">Metal-binding</keyword>
<keyword id="KW-0496">Mitochondrion</keyword>
<keyword id="KW-0999">Mitochondrion inner membrane</keyword>
<keyword id="KW-0679">Respiratory chain</keyword>
<keyword id="KW-0812">Transmembrane</keyword>
<keyword id="KW-1133">Transmembrane helix</keyword>
<keyword id="KW-0813">Transport</keyword>
<keyword id="KW-0830">Ubiquinone</keyword>
<proteinExistence type="inferred from homology"/>
<organism>
    <name type="scientific">Rhinolophus pusillus blythi</name>
    <name type="common">Horsehoe bat</name>
    <name type="synonym">Rhinolophus blythi</name>
    <dbReference type="NCBI Taxonomy" id="376555"/>
    <lineage>
        <taxon>Eukaryota</taxon>
        <taxon>Metazoa</taxon>
        <taxon>Chordata</taxon>
        <taxon>Craniata</taxon>
        <taxon>Vertebrata</taxon>
        <taxon>Euteleostomi</taxon>
        <taxon>Mammalia</taxon>
        <taxon>Eutheria</taxon>
        <taxon>Laurasiatheria</taxon>
        <taxon>Chiroptera</taxon>
        <taxon>Yinpterochiroptera</taxon>
        <taxon>Rhinolophoidea</taxon>
        <taxon>Rhinolophidae</taxon>
        <taxon>Rhinolophinae</taxon>
        <taxon>Rhinolophus</taxon>
    </lineage>
</organism>
<reference key="1">
    <citation type="submission" date="2006-03" db="EMBL/GenBank/DDBJ databases">
        <title>Discussion on the taxonomic status of Rhinolophus blythi.</title>
        <authorList>
            <person name="Xu L."/>
            <person name="Feng J."/>
            <person name="Liu Y."/>
            <person name="Sun K."/>
            <person name="Shi L."/>
            <person name="Jiang T."/>
        </authorList>
    </citation>
    <scope>NUCLEOTIDE SEQUENCE [GENOMIC DNA]</scope>
    <source>
        <strain>Isolate A-type</strain>
        <strain>Isolate B-type</strain>
        <strain>Isolate C-type</strain>
        <strain>Isolate JX-14</strain>
        <strain>Isolate YN-06c-44</strain>
    </source>
</reference>
<protein>
    <recommendedName>
        <fullName>Cytochrome b</fullName>
    </recommendedName>
    <alternativeName>
        <fullName>Complex III subunit 3</fullName>
    </alternativeName>
    <alternativeName>
        <fullName>Complex III subunit III</fullName>
    </alternativeName>
    <alternativeName>
        <fullName>Cytochrome b-c1 complex subunit 3</fullName>
    </alternativeName>
    <alternativeName>
        <fullName>Ubiquinol-cytochrome-c reductase complex cytochrome b subunit</fullName>
    </alternativeName>
</protein>
<dbReference type="EMBL" id="DQ421782">
    <property type="protein sequence ID" value="ABD79029.1"/>
    <property type="molecule type" value="Genomic_DNA"/>
</dbReference>
<dbReference type="EMBL" id="DQ421783">
    <property type="protein sequence ID" value="ABD79030.1"/>
    <property type="molecule type" value="Genomic_DNA"/>
</dbReference>
<dbReference type="EMBL" id="DQ421784">
    <property type="protein sequence ID" value="ABD79031.1"/>
    <property type="molecule type" value="Genomic_DNA"/>
</dbReference>
<dbReference type="EMBL" id="DQ865342">
    <property type="protein sequence ID" value="ABI26172.1"/>
    <property type="molecule type" value="Genomic_DNA"/>
</dbReference>
<dbReference type="EMBL" id="DQ865343">
    <property type="protein sequence ID" value="ABI26173.1"/>
    <property type="molecule type" value="Genomic_DNA"/>
</dbReference>
<dbReference type="SMR" id="Q1ZYR2"/>
<dbReference type="GO" id="GO:0005743">
    <property type="term" value="C:mitochondrial inner membrane"/>
    <property type="evidence" value="ECO:0007669"/>
    <property type="project" value="UniProtKB-SubCell"/>
</dbReference>
<dbReference type="GO" id="GO:0045275">
    <property type="term" value="C:respiratory chain complex III"/>
    <property type="evidence" value="ECO:0007669"/>
    <property type="project" value="InterPro"/>
</dbReference>
<dbReference type="GO" id="GO:0046872">
    <property type="term" value="F:metal ion binding"/>
    <property type="evidence" value="ECO:0007669"/>
    <property type="project" value="UniProtKB-KW"/>
</dbReference>
<dbReference type="GO" id="GO:0008121">
    <property type="term" value="F:ubiquinol-cytochrome-c reductase activity"/>
    <property type="evidence" value="ECO:0007669"/>
    <property type="project" value="InterPro"/>
</dbReference>
<dbReference type="GO" id="GO:0006122">
    <property type="term" value="P:mitochondrial electron transport, ubiquinol to cytochrome c"/>
    <property type="evidence" value="ECO:0007669"/>
    <property type="project" value="TreeGrafter"/>
</dbReference>
<dbReference type="CDD" id="cd00290">
    <property type="entry name" value="cytochrome_b_C"/>
    <property type="match status" value="1"/>
</dbReference>
<dbReference type="CDD" id="cd00284">
    <property type="entry name" value="Cytochrome_b_N"/>
    <property type="match status" value="1"/>
</dbReference>
<dbReference type="FunFam" id="1.20.810.10:FF:000002">
    <property type="entry name" value="Cytochrome b"/>
    <property type="match status" value="1"/>
</dbReference>
<dbReference type="Gene3D" id="1.20.810.10">
    <property type="entry name" value="Cytochrome Bc1 Complex, Chain C"/>
    <property type="match status" value="1"/>
</dbReference>
<dbReference type="InterPro" id="IPR005798">
    <property type="entry name" value="Cyt_b/b6_C"/>
</dbReference>
<dbReference type="InterPro" id="IPR036150">
    <property type="entry name" value="Cyt_b/b6_C_sf"/>
</dbReference>
<dbReference type="InterPro" id="IPR005797">
    <property type="entry name" value="Cyt_b/b6_N"/>
</dbReference>
<dbReference type="InterPro" id="IPR027387">
    <property type="entry name" value="Cytb/b6-like_sf"/>
</dbReference>
<dbReference type="InterPro" id="IPR030689">
    <property type="entry name" value="Cytochrome_b"/>
</dbReference>
<dbReference type="InterPro" id="IPR048260">
    <property type="entry name" value="Cytochrome_b_C_euk/bac"/>
</dbReference>
<dbReference type="InterPro" id="IPR048259">
    <property type="entry name" value="Cytochrome_b_N_euk/bac"/>
</dbReference>
<dbReference type="InterPro" id="IPR016174">
    <property type="entry name" value="Di-haem_cyt_TM"/>
</dbReference>
<dbReference type="PANTHER" id="PTHR19271">
    <property type="entry name" value="CYTOCHROME B"/>
    <property type="match status" value="1"/>
</dbReference>
<dbReference type="PANTHER" id="PTHR19271:SF16">
    <property type="entry name" value="CYTOCHROME B"/>
    <property type="match status" value="1"/>
</dbReference>
<dbReference type="Pfam" id="PF00032">
    <property type="entry name" value="Cytochrom_B_C"/>
    <property type="match status" value="1"/>
</dbReference>
<dbReference type="Pfam" id="PF00033">
    <property type="entry name" value="Cytochrome_B"/>
    <property type="match status" value="1"/>
</dbReference>
<dbReference type="PIRSF" id="PIRSF038885">
    <property type="entry name" value="COB"/>
    <property type="match status" value="1"/>
</dbReference>
<dbReference type="SUPFAM" id="SSF81648">
    <property type="entry name" value="a domain/subunit of cytochrome bc1 complex (Ubiquinol-cytochrome c reductase)"/>
    <property type="match status" value="1"/>
</dbReference>
<dbReference type="SUPFAM" id="SSF81342">
    <property type="entry name" value="Transmembrane di-heme cytochromes"/>
    <property type="match status" value="1"/>
</dbReference>
<dbReference type="PROSITE" id="PS51003">
    <property type="entry name" value="CYTB_CTER"/>
    <property type="match status" value="1"/>
</dbReference>
<dbReference type="PROSITE" id="PS51002">
    <property type="entry name" value="CYTB_NTER"/>
    <property type="match status" value="1"/>
</dbReference>
<geneLocation type="mitochondrion"/>
<comment type="function">
    <text evidence="2">Component of the ubiquinol-cytochrome c reductase complex (complex III or cytochrome b-c1 complex) that is part of the mitochondrial respiratory chain. The b-c1 complex mediates electron transfer from ubiquinol to cytochrome c. Contributes to the generation of a proton gradient across the mitochondrial membrane that is then used for ATP synthesis.</text>
</comment>
<comment type="cofactor">
    <cofactor evidence="2">
        <name>heme b</name>
        <dbReference type="ChEBI" id="CHEBI:60344"/>
    </cofactor>
    <text evidence="2">Binds 2 heme b groups non-covalently.</text>
</comment>
<comment type="subunit">
    <text evidence="2">The cytochrome bc1 complex contains 11 subunits: 3 respiratory subunits (MT-CYB, CYC1 and UQCRFS1), 2 core proteins (UQCRC1 and UQCRC2) and 6 low-molecular weight proteins (UQCRH/QCR6, UQCRB/QCR7, UQCRQ/QCR8, UQCR10/QCR9, UQCR11/QCR10 and a cleavage product of UQCRFS1). This cytochrome bc1 complex then forms a dimer.</text>
</comment>
<comment type="subcellular location">
    <subcellularLocation>
        <location evidence="2">Mitochondrion inner membrane</location>
        <topology evidence="2">Multi-pass membrane protein</topology>
    </subcellularLocation>
</comment>
<comment type="miscellaneous">
    <text evidence="1">Heme 1 (or BL or b562) is low-potential and absorbs at about 562 nm, and heme 2 (or BH or b566) is high-potential and absorbs at about 566 nm.</text>
</comment>
<comment type="similarity">
    <text evidence="3 4">Belongs to the cytochrome b family.</text>
</comment>
<comment type="caution">
    <text evidence="2">The full-length protein contains only eight transmembrane helices, not nine as predicted by bioinformatics tools.</text>
</comment>
<accession>Q1ZYR2</accession>
<accession>Q1ZYR4</accession>
<feature type="chain" id="PRO_0000254754" description="Cytochrome b">
    <location>
        <begin position="1"/>
        <end position="379"/>
    </location>
</feature>
<feature type="transmembrane region" description="Helical" evidence="2">
    <location>
        <begin position="33"/>
        <end position="53"/>
    </location>
</feature>
<feature type="transmembrane region" description="Helical" evidence="2">
    <location>
        <begin position="77"/>
        <end position="98"/>
    </location>
</feature>
<feature type="transmembrane region" description="Helical" evidence="2">
    <location>
        <begin position="113"/>
        <end position="133"/>
    </location>
</feature>
<feature type="transmembrane region" description="Helical" evidence="2">
    <location>
        <begin position="178"/>
        <end position="198"/>
    </location>
</feature>
<feature type="transmembrane region" description="Helical" evidence="2">
    <location>
        <begin position="226"/>
        <end position="246"/>
    </location>
</feature>
<feature type="transmembrane region" description="Helical" evidence="2">
    <location>
        <begin position="288"/>
        <end position="308"/>
    </location>
</feature>
<feature type="transmembrane region" description="Helical" evidence="2">
    <location>
        <begin position="320"/>
        <end position="340"/>
    </location>
</feature>
<feature type="transmembrane region" description="Helical" evidence="2">
    <location>
        <begin position="347"/>
        <end position="367"/>
    </location>
</feature>
<feature type="binding site" description="axial binding residue" evidence="2">
    <location>
        <position position="83"/>
    </location>
    <ligand>
        <name>heme b</name>
        <dbReference type="ChEBI" id="CHEBI:60344"/>
        <label>b562</label>
    </ligand>
    <ligandPart>
        <name>Fe</name>
        <dbReference type="ChEBI" id="CHEBI:18248"/>
    </ligandPart>
</feature>
<feature type="binding site" description="axial binding residue" evidence="2">
    <location>
        <position position="97"/>
    </location>
    <ligand>
        <name>heme b</name>
        <dbReference type="ChEBI" id="CHEBI:60344"/>
        <label>b566</label>
    </ligand>
    <ligandPart>
        <name>Fe</name>
        <dbReference type="ChEBI" id="CHEBI:18248"/>
    </ligandPart>
</feature>
<feature type="binding site" description="axial binding residue" evidence="2">
    <location>
        <position position="182"/>
    </location>
    <ligand>
        <name>heme b</name>
        <dbReference type="ChEBI" id="CHEBI:60344"/>
        <label>b562</label>
    </ligand>
    <ligandPart>
        <name>Fe</name>
        <dbReference type="ChEBI" id="CHEBI:18248"/>
    </ligandPart>
</feature>
<feature type="binding site" description="axial binding residue" evidence="2">
    <location>
        <position position="196"/>
    </location>
    <ligand>
        <name>heme b</name>
        <dbReference type="ChEBI" id="CHEBI:60344"/>
        <label>b566</label>
    </ligand>
    <ligandPart>
        <name>Fe</name>
        <dbReference type="ChEBI" id="CHEBI:18248"/>
    </ligandPart>
</feature>
<feature type="binding site" evidence="2">
    <location>
        <position position="201"/>
    </location>
    <ligand>
        <name>a ubiquinone</name>
        <dbReference type="ChEBI" id="CHEBI:16389"/>
    </ligand>
</feature>
<feature type="sequence variant" description="In strain: Isolate C-type.">
    <original>A</original>
    <variation>V</variation>
    <location>
        <position position="215"/>
    </location>
</feature>